<sequence length="232" mass="25339">MSIVNSVRAQIPPIHREGYPFVGGFALVTLILFWIWSPLGWIGTVLTIWCAYFFRNPARTTPVRDGLVVSPADGRVSMVVDIIPPPELGLGAKPLPRVSIFMSVFNCHVNRSPVAGRIERIVYSPGKFINAELDKASEDNERNSMVLSTEHGQIGVIQIAGLIARRIVSFVREGQPLVAGERFGLIRFGSRLDVYLPEGTKPLVAEGQTAIAGETILADLKGGDAGRTYRTD</sequence>
<reference key="1">
    <citation type="journal article" date="2004" name="Nat. Biotechnol.">
        <title>Complete genome sequence of the metabolically versatile photosynthetic bacterium Rhodopseudomonas palustris.</title>
        <authorList>
            <person name="Larimer F.W."/>
            <person name="Chain P."/>
            <person name="Hauser L."/>
            <person name="Lamerdin J.E."/>
            <person name="Malfatti S."/>
            <person name="Do L."/>
            <person name="Land M.L."/>
            <person name="Pelletier D.A."/>
            <person name="Beatty J.T."/>
            <person name="Lang A.S."/>
            <person name="Tabita F.R."/>
            <person name="Gibson J.L."/>
            <person name="Hanson T.E."/>
            <person name="Bobst C."/>
            <person name="Torres y Torres J.L."/>
            <person name="Peres C."/>
            <person name="Harrison F.H."/>
            <person name="Gibson J."/>
            <person name="Harwood C.S."/>
        </authorList>
    </citation>
    <scope>NUCLEOTIDE SEQUENCE [LARGE SCALE GENOMIC DNA]</scope>
    <source>
        <strain>ATCC BAA-98 / CGA009</strain>
    </source>
</reference>
<proteinExistence type="inferred from homology"/>
<comment type="function">
    <text evidence="1">Catalyzes the formation of phosphatidylethanolamine (PtdEtn) from phosphatidylserine (PtdSer).</text>
</comment>
<comment type="catalytic activity">
    <reaction evidence="1">
        <text>a 1,2-diacyl-sn-glycero-3-phospho-L-serine + H(+) = a 1,2-diacyl-sn-glycero-3-phosphoethanolamine + CO2</text>
        <dbReference type="Rhea" id="RHEA:20828"/>
        <dbReference type="ChEBI" id="CHEBI:15378"/>
        <dbReference type="ChEBI" id="CHEBI:16526"/>
        <dbReference type="ChEBI" id="CHEBI:57262"/>
        <dbReference type="ChEBI" id="CHEBI:64612"/>
        <dbReference type="EC" id="4.1.1.65"/>
    </reaction>
</comment>
<comment type="cofactor">
    <cofactor evidence="1">
        <name>pyruvate</name>
        <dbReference type="ChEBI" id="CHEBI:15361"/>
    </cofactor>
    <text evidence="1">Binds 1 pyruvoyl group covalently per subunit.</text>
</comment>
<comment type="pathway">
    <text evidence="1">Phospholipid metabolism; phosphatidylethanolamine biosynthesis; phosphatidylethanolamine from CDP-diacylglycerol: step 2/2.</text>
</comment>
<comment type="subunit">
    <text evidence="1">Heterodimer of a large membrane-associated beta subunit and a small pyruvoyl-containing alpha subunit.</text>
</comment>
<comment type="subcellular location">
    <subcellularLocation>
        <location evidence="1">Cell membrane</location>
        <topology evidence="1">Peripheral membrane protein</topology>
    </subcellularLocation>
</comment>
<comment type="PTM">
    <text evidence="1">Is synthesized initially as an inactive proenzyme. Formation of the active enzyme involves a self-maturation process in which the active site pyruvoyl group is generated from an internal serine residue via an autocatalytic post-translational modification. Two non-identical subunits are generated from the proenzyme in this reaction, and the pyruvate is formed at the N-terminus of the alpha chain, which is derived from the carboxyl end of the proenzyme. The post-translation cleavage follows an unusual pathway, termed non-hydrolytic serinolysis, in which the side chain hydroxyl group of the serine supplies its oxygen atom to form the C-terminus of the beta chain, while the remainder of the serine residue undergoes an oxidative deamination to produce ammonia and the pyruvoyl prosthetic group on the alpha chain.</text>
</comment>
<comment type="similarity">
    <text evidence="1">Belongs to the phosphatidylserine decarboxylase family. PSD-A subfamily.</text>
</comment>
<comment type="sequence caution" evidence="2">
    <conflict type="erroneous initiation">
        <sequence resource="EMBL-CDS" id="CAE27447"/>
    </conflict>
</comment>
<name>PSD_RHOPA</name>
<keyword id="KW-1003">Cell membrane</keyword>
<keyword id="KW-0210">Decarboxylase</keyword>
<keyword id="KW-0444">Lipid biosynthesis</keyword>
<keyword id="KW-0443">Lipid metabolism</keyword>
<keyword id="KW-0456">Lyase</keyword>
<keyword id="KW-0472">Membrane</keyword>
<keyword id="KW-0594">Phospholipid biosynthesis</keyword>
<keyword id="KW-1208">Phospholipid metabolism</keyword>
<keyword id="KW-0670">Pyruvate</keyword>
<keyword id="KW-0865">Zymogen</keyword>
<organism>
    <name type="scientific">Rhodopseudomonas palustris (strain ATCC BAA-98 / CGA009)</name>
    <dbReference type="NCBI Taxonomy" id="258594"/>
    <lineage>
        <taxon>Bacteria</taxon>
        <taxon>Pseudomonadati</taxon>
        <taxon>Pseudomonadota</taxon>
        <taxon>Alphaproteobacteria</taxon>
        <taxon>Hyphomicrobiales</taxon>
        <taxon>Nitrobacteraceae</taxon>
        <taxon>Rhodopseudomonas</taxon>
    </lineage>
</organism>
<protein>
    <recommendedName>
        <fullName evidence="1">Phosphatidylserine decarboxylase proenzyme</fullName>
        <ecNumber evidence="1">4.1.1.65</ecNumber>
    </recommendedName>
    <component>
        <recommendedName>
            <fullName evidence="1">Phosphatidylserine decarboxylase alpha chain</fullName>
        </recommendedName>
    </component>
    <component>
        <recommendedName>
            <fullName evidence="1">Phosphatidylserine decarboxylase beta chain</fullName>
        </recommendedName>
    </component>
</protein>
<evidence type="ECO:0000255" key="1">
    <source>
        <dbReference type="HAMAP-Rule" id="MF_00664"/>
    </source>
</evidence>
<evidence type="ECO:0000305" key="2"/>
<dbReference type="EC" id="4.1.1.65" evidence="1"/>
<dbReference type="EMBL" id="BX572599">
    <property type="protein sequence ID" value="CAE27447.1"/>
    <property type="status" value="ALT_INIT"/>
    <property type="molecule type" value="Genomic_DNA"/>
</dbReference>
<dbReference type="STRING" id="258594.RPA2006"/>
<dbReference type="eggNOG" id="COG0688">
    <property type="taxonomic scope" value="Bacteria"/>
</dbReference>
<dbReference type="HOGENOM" id="CLU_072492_0_0_5"/>
<dbReference type="PhylomeDB" id="Q6N898"/>
<dbReference type="UniPathway" id="UPA00558">
    <property type="reaction ID" value="UER00616"/>
</dbReference>
<dbReference type="GO" id="GO:0005886">
    <property type="term" value="C:plasma membrane"/>
    <property type="evidence" value="ECO:0007669"/>
    <property type="project" value="UniProtKB-SubCell"/>
</dbReference>
<dbReference type="GO" id="GO:0004609">
    <property type="term" value="F:phosphatidylserine decarboxylase activity"/>
    <property type="evidence" value="ECO:0007669"/>
    <property type="project" value="UniProtKB-UniRule"/>
</dbReference>
<dbReference type="GO" id="GO:0006646">
    <property type="term" value="P:phosphatidylethanolamine biosynthetic process"/>
    <property type="evidence" value="ECO:0007669"/>
    <property type="project" value="UniProtKB-UniRule"/>
</dbReference>
<dbReference type="HAMAP" id="MF_00664">
    <property type="entry name" value="PS_decarb_PSD_A"/>
    <property type="match status" value="1"/>
</dbReference>
<dbReference type="InterPro" id="IPR003817">
    <property type="entry name" value="PS_Dcarbxylase"/>
</dbReference>
<dbReference type="InterPro" id="IPR033175">
    <property type="entry name" value="PSD-A"/>
</dbReference>
<dbReference type="NCBIfam" id="NF003677">
    <property type="entry name" value="PRK05305.1-1"/>
    <property type="match status" value="1"/>
</dbReference>
<dbReference type="NCBIfam" id="NF003678">
    <property type="entry name" value="PRK05305.1-2"/>
    <property type="match status" value="1"/>
</dbReference>
<dbReference type="NCBIfam" id="NF003679">
    <property type="entry name" value="PRK05305.1-3"/>
    <property type="match status" value="1"/>
</dbReference>
<dbReference type="NCBIfam" id="NF003685">
    <property type="entry name" value="PRK05305.2-5"/>
    <property type="match status" value="1"/>
</dbReference>
<dbReference type="PANTHER" id="PTHR35809">
    <property type="entry name" value="ARCHAETIDYLSERINE DECARBOXYLASE PROENZYME-RELATED"/>
    <property type="match status" value="1"/>
</dbReference>
<dbReference type="PANTHER" id="PTHR35809:SF1">
    <property type="entry name" value="ARCHAETIDYLSERINE DECARBOXYLASE PROENZYME-RELATED"/>
    <property type="match status" value="1"/>
</dbReference>
<dbReference type="Pfam" id="PF02666">
    <property type="entry name" value="PS_Dcarbxylase"/>
    <property type="match status" value="1"/>
</dbReference>
<gene>
    <name evidence="1" type="primary">psd</name>
    <name type="ordered locus">RPA2006</name>
</gene>
<accession>Q6N898</accession>
<feature type="chain" id="PRO_0000029801" description="Phosphatidylserine decarboxylase beta chain" evidence="1">
    <location>
        <begin position="1"/>
        <end position="189"/>
    </location>
</feature>
<feature type="chain" id="PRO_0000029802" description="Phosphatidylserine decarboxylase alpha chain" evidence="1">
    <location>
        <begin position="190"/>
        <end position="232"/>
    </location>
</feature>
<feature type="active site" description="Schiff-base intermediate with substrate; via pyruvic acid" evidence="1">
    <location>
        <position position="190"/>
    </location>
</feature>
<feature type="site" description="Cleavage (non-hydrolytic); by autocatalysis" evidence="1">
    <location>
        <begin position="189"/>
        <end position="190"/>
    </location>
</feature>
<feature type="modified residue" description="Pyruvic acid (Ser); by autocatalysis" evidence="1">
    <location>
        <position position="190"/>
    </location>
</feature>